<name>FANCJ_HUMAN</name>
<accession>Q9BX63</accession>
<accession>A0A024QZ45</accession>
<accession>Q3MJE2</accession>
<accession>Q8NCI5</accession>
<feature type="chain" id="PRO_0000055173" description="Fanconi anemia group J protein">
    <location>
        <begin position="1"/>
        <end position="1249"/>
    </location>
</feature>
<feature type="domain" description="Helicase ATP-binding" evidence="3">
    <location>
        <begin position="11"/>
        <end position="442"/>
    </location>
</feature>
<feature type="region of interest" description="Disordered" evidence="4">
    <location>
        <begin position="102"/>
        <end position="131"/>
    </location>
</feature>
<feature type="region of interest" description="Interaction with BRCA1" evidence="5">
    <location>
        <begin position="888"/>
        <end position="1063"/>
    </location>
</feature>
<feature type="region of interest" description="Disordered" evidence="4">
    <location>
        <begin position="1018"/>
        <end position="1042"/>
    </location>
</feature>
<feature type="region of interest" description="Disordered" evidence="4">
    <location>
        <begin position="1108"/>
        <end position="1127"/>
    </location>
</feature>
<feature type="short sequence motif" description="Nuclear localization signal" evidence="2">
    <location>
        <begin position="158"/>
        <end position="175"/>
    </location>
</feature>
<feature type="short sequence motif" description="DEAH box">
    <location>
        <begin position="393"/>
        <end position="396"/>
    </location>
</feature>
<feature type="compositionally biased region" description="Polar residues" evidence="4">
    <location>
        <begin position="102"/>
        <end position="127"/>
    </location>
</feature>
<feature type="compositionally biased region" description="Polar residues" evidence="4">
    <location>
        <begin position="1023"/>
        <end position="1032"/>
    </location>
</feature>
<feature type="compositionally biased region" description="Basic and acidic residues" evidence="4">
    <location>
        <begin position="1110"/>
        <end position="1122"/>
    </location>
</feature>
<feature type="binding site" evidence="3">
    <location>
        <begin position="185"/>
        <end position="192"/>
    </location>
    <ligand>
        <name>ATP</name>
        <dbReference type="ChEBI" id="CHEBI:30616"/>
    </ligand>
</feature>
<feature type="binding site" evidence="1">
    <location>
        <position position="283"/>
    </location>
    <ligand>
        <name>[4Fe-4S] cluster</name>
        <dbReference type="ChEBI" id="CHEBI:49883"/>
    </ligand>
</feature>
<feature type="binding site" evidence="1">
    <location>
        <position position="298"/>
    </location>
    <ligand>
        <name>[4Fe-4S] cluster</name>
        <dbReference type="ChEBI" id="CHEBI:49883"/>
    </ligand>
</feature>
<feature type="binding site" evidence="1">
    <location>
        <position position="310"/>
    </location>
    <ligand>
        <name>[4Fe-4S] cluster</name>
        <dbReference type="ChEBI" id="CHEBI:49883"/>
    </ligand>
</feature>
<feature type="binding site" evidence="1">
    <location>
        <position position="350"/>
    </location>
    <ligand>
        <name>[4Fe-4S] cluster</name>
        <dbReference type="ChEBI" id="CHEBI:49883"/>
    </ligand>
</feature>
<feature type="modified residue" description="Phosphoserine" evidence="32">
    <location>
        <position position="505"/>
    </location>
</feature>
<feature type="modified residue" description="Phosphoserine" evidence="29">
    <location>
        <position position="927"/>
    </location>
</feature>
<feature type="modified residue" description="Phosphoserine" evidence="29 30">
    <location>
        <position position="930"/>
    </location>
</feature>
<feature type="modified residue" description="Phosphoserine" evidence="32">
    <location>
        <position position="956"/>
    </location>
</feature>
<feature type="modified residue" description="Phosphoserine" evidence="9 29">
    <location>
        <position position="990"/>
    </location>
</feature>
<feature type="modified residue" description="Phosphoserine" evidence="32">
    <location>
        <position position="1004"/>
    </location>
</feature>
<feature type="modified residue" description="Phosphoserine" evidence="30 32">
    <location>
        <position position="1032"/>
    </location>
</feature>
<feature type="modified residue" description="Phosphoserine" evidence="31">
    <location>
        <position position="1237"/>
    </location>
</feature>
<feature type="modified residue" description="N6-acetyllysine" evidence="22">
    <location>
        <position position="1249"/>
    </location>
</feature>
<feature type="splice variant" id="VSP_012540" description="In isoform 2." evidence="26">
    <original>NDPVFLEEAGKAEKIVISRSTSPTFN</original>
    <variation>SMKSSSHLPLIEKSFIIFSEMIFIWV</variation>
    <location>
        <begin position="969"/>
        <end position="994"/>
    </location>
</feature>
<feature type="splice variant" id="VSP_012541" description="In isoform 2." evidence="26">
    <location>
        <begin position="995"/>
        <end position="1249"/>
    </location>
</feature>
<feature type="sequence variant" id="VAR_020896" description="In BC; early onset; loss of ATPase and helicase activities; dbSNP:rs28903098." evidence="5 11">
    <original>P</original>
    <variation>A</variation>
    <location>
        <position position="47"/>
    </location>
</feature>
<feature type="sequence variant" id="VAR_020897" description="In dbSNP:rs4988345." evidence="6 8">
    <original>R</original>
    <variation>C</variation>
    <location>
        <position position="173"/>
    </location>
</feature>
<feature type="sequence variant" id="VAR_020898" description="In dbSNP:rs4988346." evidence="5 8">
    <original>V</original>
    <variation>I</variation>
    <location>
        <position position="193"/>
    </location>
</feature>
<feature type="sequence variant" id="VAR_020899" description="In dbSNP:rs4988347." evidence="8">
    <original>L</original>
    <variation>P</variation>
    <location>
        <position position="195"/>
    </location>
</feature>
<feature type="sequence variant" id="VAR_023700" description="In FANCJ." evidence="14">
    <original>Q</original>
    <variation>H</variation>
    <location>
        <position position="255"/>
    </location>
</feature>
<feature type="sequence variant" id="VAR_023701" description="In dbSNP:rs28997569." evidence="14">
    <original>R</original>
    <variation>W</variation>
    <location>
        <position position="264"/>
    </location>
</feature>
<feature type="sequence variant" id="VAR_020900" description="In BC; early onset; reduces helicase efficiency on longer substrates; dbSNP:rs137852985." evidence="5 11">
    <original>M</original>
    <variation>I</variation>
    <location>
        <position position="299"/>
    </location>
</feature>
<feature type="sequence variant" id="VAR_023702" description="In FANCJ; destabilizes iron-sulfur-binding and abolishes helicase activity; dbSNP:rs149364097." evidence="15 21">
    <original>A</original>
    <variation>P</variation>
    <location>
        <position position="349"/>
    </location>
</feature>
<feature type="sequence variant" id="VAR_020901" description="In dbSNP:rs150624408." evidence="8">
    <original>R</original>
    <variation>W</variation>
    <location>
        <position position="419"/>
    </location>
</feature>
<feature type="sequence variant" id="VAR_020902" description="In dbSNP:rs4988350." evidence="8">
    <original>F</original>
    <variation>V</variation>
    <location>
        <position position="531"/>
    </location>
</feature>
<feature type="sequence variant" id="VAR_020903" description="In dbSNP:rs4988349." evidence="8">
    <original>Q</original>
    <variation>L</variation>
    <location>
        <position position="540"/>
    </location>
</feature>
<feature type="sequence variant" id="VAR_052192" description="In dbSNP:rs28997572.">
    <original>I</original>
    <variation>M</variation>
    <location>
        <position position="633"/>
    </location>
</feature>
<feature type="sequence variant" id="VAR_023703" description="In FANCJ; associated with C-707; dbSNP:rs786202760." evidence="14">
    <original>W</original>
    <variation>C</variation>
    <location>
        <position position="647"/>
    </location>
</feature>
<feature type="sequence variant" id="VAR_023704" description="In FANCJ; associated with C-647; dbSNP:rs764803896." evidence="14">
    <original>R</original>
    <variation>C</variation>
    <location>
        <position position="707"/>
    </location>
</feature>
<feature type="sequence variant" id="VAR_020904" description="In dbSNP:rs4988355." evidence="8">
    <original>C</original>
    <variation>Y</variation>
    <location>
        <position position="832"/>
    </location>
</feature>
<feature type="sequence variant" id="VAR_020905" description="In dbSNP:rs4986764." evidence="5 6 7 8 10 16 20">
    <original>S</original>
    <variation>P</variation>
    <location>
        <position position="919"/>
    </location>
</feature>
<feature type="sequence variant" id="VAR_020906" description="In dbSNP:rs4988356." evidence="8">
    <original>V</original>
    <variation>G</variation>
    <location>
        <position position="935"/>
    </location>
</feature>
<feature type="sequence variant" id="VAR_020907" description="In a patient with ovarian cancer; uncertain significance; dbSNP:rs1199923024." evidence="7">
    <original>P</original>
    <variation>L</variation>
    <location>
        <position position="1034"/>
    </location>
</feature>
<feature type="sequence variant" id="VAR_052193" description="In dbSNP:rs28997573.">
    <original>D</original>
    <variation>E</variation>
    <location>
        <position position="1148"/>
    </location>
</feature>
<feature type="mutagenesis site" description="Abolishes ATPase and dsDNA helicase activities, preventing ability to unfold DNA-protein cross-links. Does not unwind G-quadruplex DNA. Disrupts BRCA1-mediated double-strand break repair." evidence="5 11 13 19 24">
    <original>K</original>
    <variation>R</variation>
    <location>
        <position position="52"/>
    </location>
</feature>
<feature type="mutagenesis site" description="Does not affect the interaction with BRCA1." evidence="9">
    <original>S</original>
    <variation>A</variation>
    <location>
        <position position="986"/>
    </location>
</feature>
<feature type="mutagenesis site" description="Does not affect the interaction with BRCA1." evidence="9">
    <original>S</original>
    <variation>A</variation>
    <location>
        <position position="988"/>
    </location>
</feature>
<feature type="mutagenesis site" description="Does not affect the interaction with BRCA1." evidence="9">
    <original>T</original>
    <variation>A</variation>
    <location>
        <position position="989"/>
    </location>
</feature>
<feature type="mutagenesis site" description="Disrupts the interaction with BRCA1." evidence="9">
    <original>S</original>
    <variation>A</variation>
    <location>
        <position position="990"/>
    </location>
</feature>
<feature type="mutagenesis site" description="Abolishes phosphorylation of S-990. Impairs the interaction with BRCA1." evidence="9">
    <original>P</original>
    <variation>A</variation>
    <location>
        <position position="991"/>
    </location>
</feature>
<feature type="mutagenesis site" description="Does not affect the interaction with BRCA1." evidence="9">
    <original>T</original>
    <variation>A</variation>
    <location>
        <position position="992"/>
    </location>
</feature>
<feature type="mutagenesis site" description="Abolishes phosphorylation of S-990. Impairs the interaction with BRCA1." evidence="9">
    <original>F</original>
    <variation>A</variation>
    <location>
        <position position="993"/>
    </location>
</feature>
<feature type="mutagenesis site" description="Does not affect the interaction with BRCA1." evidence="9">
    <original>T</original>
    <variation>A</variation>
    <location>
        <position position="997"/>
    </location>
</feature>
<feature type="mutagenesis site" description="Does not affect the interaction with BRCA1." evidence="9">
    <original>S</original>
    <variation>A</variation>
    <location>
        <position position="1001"/>
    </location>
</feature>
<feature type="mutagenesis site" description="Does not affect the interaction with BRCA1." evidence="9">
    <original>S</original>
    <variation>A</variation>
    <location>
        <position position="1003"/>
    </location>
</feature>
<feature type="mutagenesis site" description="Does not affect the interaction with BRCA1." evidence="9">
    <original>S</original>
    <variation>A</variation>
    <location>
        <position position="1004"/>
    </location>
</feature>
<feature type="mutagenesis site" description="Does not affect the interaction with BRCA1." evidence="9">
    <original>S</original>
    <variation>A</variation>
    <location>
        <position position="1007"/>
    </location>
</feature>
<feature type="mutagenesis site" description="Does not affect the interaction with BRCA1." evidence="9">
    <original>Y</original>
    <variation>A</variation>
    <location>
        <position position="1011"/>
    </location>
</feature>
<feature type="mutagenesis site" description="Does not affect the interaction with BRCA1." evidence="9">
    <original>T</original>
    <variation>A</variation>
    <location>
        <position position="1013"/>
    </location>
</feature>
<feature type="sequence conflict" description="In Ref. 5; BAC11156." evidence="27" ref="5">
    <original>I</original>
    <variation>V</variation>
    <location>
        <position position="641"/>
    </location>
</feature>
<feature type="sequence conflict" description="In Ref. 1; AA sequence." evidence="27" ref="1">
    <original>E</original>
    <variation>I</variation>
    <location>
        <position position="767"/>
    </location>
</feature>
<dbReference type="EC" id="5.6.2.3" evidence="11 21 24"/>
<dbReference type="EMBL" id="AF360549">
    <property type="protein sequence ID" value="AAK38111.1"/>
    <property type="molecule type" value="mRNA"/>
</dbReference>
<dbReference type="EMBL" id="AC002994">
    <property type="status" value="NOT_ANNOTATED_CDS"/>
    <property type="molecule type" value="Genomic_DNA"/>
</dbReference>
<dbReference type="EMBL" id="AC005969">
    <property type="status" value="NOT_ANNOTATED_CDS"/>
    <property type="molecule type" value="Genomic_DNA"/>
</dbReference>
<dbReference type="EMBL" id="AC060798">
    <property type="status" value="NOT_ANNOTATED_CDS"/>
    <property type="molecule type" value="Genomic_DNA"/>
</dbReference>
<dbReference type="EMBL" id="CH471179">
    <property type="protein sequence ID" value="EAW51430.1"/>
    <property type="molecule type" value="Genomic_DNA"/>
</dbReference>
<dbReference type="EMBL" id="CH471179">
    <property type="protein sequence ID" value="EAW51432.1"/>
    <property type="molecule type" value="Genomic_DNA"/>
</dbReference>
<dbReference type="EMBL" id="CH471179">
    <property type="protein sequence ID" value="EAW51431.1"/>
    <property type="molecule type" value="Genomic_DNA"/>
</dbReference>
<dbReference type="EMBL" id="CH471179">
    <property type="protein sequence ID" value="EAW51433.1"/>
    <property type="molecule type" value="Genomic_DNA"/>
</dbReference>
<dbReference type="EMBL" id="BC101472">
    <property type="protein sequence ID" value="AAI01473.1"/>
    <property type="molecule type" value="mRNA"/>
</dbReference>
<dbReference type="EMBL" id="BC101474">
    <property type="protein sequence ID" value="AAI01475.1"/>
    <property type="molecule type" value="mRNA"/>
</dbReference>
<dbReference type="EMBL" id="AK074713">
    <property type="protein sequence ID" value="BAC11156.1"/>
    <property type="status" value="ALT_INIT"/>
    <property type="molecule type" value="mRNA"/>
</dbReference>
<dbReference type="CCDS" id="CCDS11631.1">
    <molecule id="Q9BX63-1"/>
</dbReference>
<dbReference type="RefSeq" id="NP_114432.2">
    <molecule id="Q9BX63-1"/>
    <property type="nucleotide sequence ID" value="NM_032043.3"/>
</dbReference>
<dbReference type="RefSeq" id="XP_047292847.1">
    <molecule id="Q9BX63-1"/>
    <property type="nucleotide sequence ID" value="XM_047436891.1"/>
</dbReference>
<dbReference type="RefSeq" id="XP_047292848.1">
    <molecule id="Q9BX63-1"/>
    <property type="nucleotide sequence ID" value="XM_047436892.1"/>
</dbReference>
<dbReference type="PDB" id="1T15">
    <property type="method" value="X-ray"/>
    <property type="resolution" value="1.85 A"/>
    <property type="chains" value="B=988-995"/>
</dbReference>
<dbReference type="PDB" id="1T29">
    <property type="method" value="X-ray"/>
    <property type="resolution" value="2.30 A"/>
    <property type="chains" value="B=985-998"/>
</dbReference>
<dbReference type="PDB" id="3AL3">
    <property type="method" value="X-ray"/>
    <property type="resolution" value="2.15 A"/>
    <property type="chains" value="B=1129-1138"/>
</dbReference>
<dbReference type="PDBsum" id="1T15"/>
<dbReference type="PDBsum" id="1T29"/>
<dbReference type="PDBsum" id="3AL3"/>
<dbReference type="EMDB" id="EMD-29673"/>
<dbReference type="EMDB" id="EMD-29674"/>
<dbReference type="SMR" id="Q9BX63"/>
<dbReference type="BioGRID" id="123841">
    <property type="interactions" value="94"/>
</dbReference>
<dbReference type="ComplexPortal" id="CPX-4426">
    <property type="entry name" value="BRCA1-B complex"/>
</dbReference>
<dbReference type="CORUM" id="Q9BX63"/>
<dbReference type="DIP" id="DIP-41787N"/>
<dbReference type="ELM" id="Q9BX63"/>
<dbReference type="FunCoup" id="Q9BX63">
    <property type="interactions" value="2762"/>
</dbReference>
<dbReference type="IntAct" id="Q9BX63">
    <property type="interactions" value="51"/>
</dbReference>
<dbReference type="MINT" id="Q9BX63"/>
<dbReference type="STRING" id="9606.ENSP00000259008"/>
<dbReference type="BindingDB" id="Q9BX63"/>
<dbReference type="GlyGen" id="Q9BX63">
    <property type="glycosylation" value="1 site, 1 O-linked glycan (1 site)"/>
</dbReference>
<dbReference type="iPTMnet" id="Q9BX63"/>
<dbReference type="PhosphoSitePlus" id="Q9BX63"/>
<dbReference type="SwissPalm" id="Q9BX63"/>
<dbReference type="BioMuta" id="BRIP1"/>
<dbReference type="DMDM" id="57012613"/>
<dbReference type="CPTAC" id="CPTAC-3220"/>
<dbReference type="CPTAC" id="CPTAC-3221"/>
<dbReference type="CPTAC" id="CPTAC-3222"/>
<dbReference type="CPTAC" id="CPTAC-3281"/>
<dbReference type="CPTAC" id="CPTAC-918"/>
<dbReference type="jPOST" id="Q9BX63"/>
<dbReference type="MassIVE" id="Q9BX63"/>
<dbReference type="PaxDb" id="9606-ENSP00000259008"/>
<dbReference type="PeptideAtlas" id="Q9BX63"/>
<dbReference type="ProteomicsDB" id="79352">
    <molecule id="Q9BX63-1"/>
</dbReference>
<dbReference type="ProteomicsDB" id="79353">
    <molecule id="Q9BX63-2"/>
</dbReference>
<dbReference type="Pumba" id="Q9BX63"/>
<dbReference type="Antibodypedia" id="18594">
    <property type="antibodies" value="307 antibodies from 36 providers"/>
</dbReference>
<dbReference type="CPTC" id="Q9BX63">
    <property type="antibodies" value="5 antibodies"/>
</dbReference>
<dbReference type="DNASU" id="83990"/>
<dbReference type="Ensembl" id="ENST00000259008.7">
    <molecule id="Q9BX63-1"/>
    <property type="protein sequence ID" value="ENSP00000259008.2"/>
    <property type="gene ID" value="ENSG00000136492.10"/>
</dbReference>
<dbReference type="Ensembl" id="ENST00000577598.5">
    <molecule id="Q9BX63-2"/>
    <property type="protein sequence ID" value="ENSP00000464654.1"/>
    <property type="gene ID" value="ENSG00000136492.10"/>
</dbReference>
<dbReference type="Ensembl" id="ENST00000682453.1">
    <molecule id="Q9BX63-1"/>
    <property type="protein sequence ID" value="ENSP00000506943.1"/>
    <property type="gene ID" value="ENSG00000136492.10"/>
</dbReference>
<dbReference type="Ensembl" id="ENST00000683039.1">
    <molecule id="Q9BX63-1"/>
    <property type="protein sequence ID" value="ENSP00000508303.1"/>
    <property type="gene ID" value="ENSG00000136492.10"/>
</dbReference>
<dbReference type="GeneID" id="83990"/>
<dbReference type="KEGG" id="hsa:83990"/>
<dbReference type="MANE-Select" id="ENST00000259008.7">
    <property type="protein sequence ID" value="ENSP00000259008.2"/>
    <property type="RefSeq nucleotide sequence ID" value="NM_032043.3"/>
    <property type="RefSeq protein sequence ID" value="NP_114432.2"/>
</dbReference>
<dbReference type="UCSC" id="uc002izk.3">
    <molecule id="Q9BX63-1"/>
    <property type="organism name" value="human"/>
</dbReference>
<dbReference type="AGR" id="HGNC:20473"/>
<dbReference type="CTD" id="83990"/>
<dbReference type="DisGeNET" id="83990"/>
<dbReference type="GeneCards" id="BRIP1"/>
<dbReference type="GeneReviews" id="BRIP1"/>
<dbReference type="HGNC" id="HGNC:20473">
    <property type="gene designation" value="BRIP1"/>
</dbReference>
<dbReference type="HPA" id="ENSG00000136492">
    <property type="expression patterns" value="Group enriched (bone marrow, esophagus, lymphoid tissue, testis)"/>
</dbReference>
<dbReference type="MalaCards" id="BRIP1"/>
<dbReference type="MIM" id="114480">
    <property type="type" value="phenotype"/>
</dbReference>
<dbReference type="MIM" id="605882">
    <property type="type" value="gene"/>
</dbReference>
<dbReference type="MIM" id="609054">
    <property type="type" value="phenotype"/>
</dbReference>
<dbReference type="neXtProt" id="NX_Q9BX63"/>
<dbReference type="OpenTargets" id="ENSG00000136492"/>
<dbReference type="Orphanet" id="84">
    <property type="disease" value="Fanconi anemia"/>
</dbReference>
<dbReference type="Orphanet" id="145">
    <property type="disease" value="Hereditary breast and/or ovarian cancer syndrome"/>
</dbReference>
<dbReference type="PharmGKB" id="PA134906421"/>
<dbReference type="VEuPathDB" id="HostDB:ENSG00000136492"/>
<dbReference type="eggNOG" id="KOG1132">
    <property type="taxonomic scope" value="Eukaryota"/>
</dbReference>
<dbReference type="GeneTree" id="ENSGT00950000182970"/>
<dbReference type="InParanoid" id="Q9BX63"/>
<dbReference type="OMA" id="FSNDNAR"/>
<dbReference type="OrthoDB" id="19182at2759"/>
<dbReference type="PAN-GO" id="Q9BX63">
    <property type="GO annotations" value="4 GO annotations based on evolutionary models"/>
</dbReference>
<dbReference type="PhylomeDB" id="Q9BX63"/>
<dbReference type="TreeFam" id="TF329449"/>
<dbReference type="BRENDA" id="3.6.4.12">
    <property type="organism ID" value="2681"/>
</dbReference>
<dbReference type="PathwayCommons" id="Q9BX63"/>
<dbReference type="Reactome" id="R-HSA-2564830">
    <property type="pathway name" value="Cytosolic iron-sulfur cluster assembly"/>
</dbReference>
<dbReference type="Reactome" id="R-HSA-5685938">
    <property type="pathway name" value="HDR through Single Strand Annealing (SSA)"/>
</dbReference>
<dbReference type="Reactome" id="R-HSA-5685942">
    <property type="pathway name" value="HDR through Homologous Recombination (HRR)"/>
</dbReference>
<dbReference type="Reactome" id="R-HSA-5693554">
    <property type="pathway name" value="Resolution of D-loop Structures through Synthesis-Dependent Strand Annealing (SDSA)"/>
</dbReference>
<dbReference type="Reactome" id="R-HSA-5693568">
    <property type="pathway name" value="Resolution of D-loop Structures through Holliday Junction Intermediates"/>
</dbReference>
<dbReference type="Reactome" id="R-HSA-5693579">
    <property type="pathway name" value="Homologous DNA Pairing and Strand Exchange"/>
</dbReference>
<dbReference type="Reactome" id="R-HSA-5693607">
    <property type="pathway name" value="Processing of DNA double-strand break ends"/>
</dbReference>
<dbReference type="Reactome" id="R-HSA-5693616">
    <property type="pathway name" value="Presynaptic phase of homologous DNA pairing and strand exchange"/>
</dbReference>
<dbReference type="Reactome" id="R-HSA-6804756">
    <property type="pathway name" value="Regulation of TP53 Activity through Phosphorylation"/>
</dbReference>
<dbReference type="Reactome" id="R-HSA-69473">
    <property type="pathway name" value="G2/M DNA damage checkpoint"/>
</dbReference>
<dbReference type="Reactome" id="R-HSA-9701192">
    <property type="pathway name" value="Defective homologous recombination repair (HRR) due to BRCA1 loss of function"/>
</dbReference>
<dbReference type="Reactome" id="R-HSA-9704331">
    <property type="pathway name" value="Defective HDR through Homologous Recombination Repair (HRR) due to PALB2 loss of BRCA1 binding function"/>
</dbReference>
<dbReference type="Reactome" id="R-HSA-9704646">
    <property type="pathway name" value="Defective HDR through Homologous Recombination Repair (HRR) due to PALB2 loss of BRCA2/RAD51/RAD51C binding function"/>
</dbReference>
<dbReference type="Reactome" id="R-HSA-9709570">
    <property type="pathway name" value="Impaired BRCA2 binding to RAD51"/>
</dbReference>
<dbReference type="Reactome" id="R-HSA-9709603">
    <property type="pathway name" value="Impaired BRCA2 binding to PALB2"/>
</dbReference>
<dbReference type="SignaLink" id="Q9BX63"/>
<dbReference type="SIGNOR" id="Q9BX63"/>
<dbReference type="BioGRID-ORCS" id="83990">
    <property type="hits" value="108 hits in 1165 CRISPR screens"/>
</dbReference>
<dbReference type="ChiTaRS" id="BRIP1">
    <property type="organism name" value="human"/>
</dbReference>
<dbReference type="EvolutionaryTrace" id="Q9BX63"/>
<dbReference type="GeneWiki" id="BRIP1"/>
<dbReference type="GenomeRNAi" id="83990"/>
<dbReference type="Pharos" id="Q9BX63">
    <property type="development level" value="Tbio"/>
</dbReference>
<dbReference type="PRO" id="PR:Q9BX63"/>
<dbReference type="Proteomes" id="UP000005640">
    <property type="component" value="Chromosome 17"/>
</dbReference>
<dbReference type="RNAct" id="Q9BX63">
    <property type="molecule type" value="protein"/>
</dbReference>
<dbReference type="Bgee" id="ENSG00000136492">
    <property type="expression patterns" value="Expressed in ventricular zone and 126 other cell types or tissues"/>
</dbReference>
<dbReference type="ExpressionAtlas" id="Q9BX63">
    <property type="expression patterns" value="baseline and differential"/>
</dbReference>
<dbReference type="GO" id="GO:0070532">
    <property type="term" value="C:BRCA1-B complex"/>
    <property type="evidence" value="ECO:0000353"/>
    <property type="project" value="ComplexPortal"/>
</dbReference>
<dbReference type="GO" id="GO:0005737">
    <property type="term" value="C:cytoplasm"/>
    <property type="evidence" value="ECO:0000314"/>
    <property type="project" value="UniProtKB"/>
</dbReference>
<dbReference type="GO" id="GO:0031965">
    <property type="term" value="C:nuclear membrane"/>
    <property type="evidence" value="ECO:0000314"/>
    <property type="project" value="HPA"/>
</dbReference>
<dbReference type="GO" id="GO:0005654">
    <property type="term" value="C:nucleoplasm"/>
    <property type="evidence" value="ECO:0000314"/>
    <property type="project" value="HPA"/>
</dbReference>
<dbReference type="GO" id="GO:0005634">
    <property type="term" value="C:nucleus"/>
    <property type="evidence" value="ECO:0000314"/>
    <property type="project" value="UniProtKB"/>
</dbReference>
<dbReference type="GO" id="GO:0005657">
    <property type="term" value="C:replication fork"/>
    <property type="evidence" value="ECO:0000314"/>
    <property type="project" value="UniProt"/>
</dbReference>
<dbReference type="GO" id="GO:0051539">
    <property type="term" value="F:4 iron, 4 sulfur cluster binding"/>
    <property type="evidence" value="ECO:0007669"/>
    <property type="project" value="UniProtKB-KW"/>
</dbReference>
<dbReference type="GO" id="GO:0043139">
    <property type="term" value="F:5'-3' DNA helicase activity"/>
    <property type="evidence" value="ECO:0000314"/>
    <property type="project" value="UniProtKB"/>
</dbReference>
<dbReference type="GO" id="GO:0005524">
    <property type="term" value="F:ATP binding"/>
    <property type="evidence" value="ECO:0007669"/>
    <property type="project" value="UniProtKB-KW"/>
</dbReference>
<dbReference type="GO" id="GO:0016887">
    <property type="term" value="F:ATP hydrolysis activity"/>
    <property type="evidence" value="ECO:0007669"/>
    <property type="project" value="RHEA"/>
</dbReference>
<dbReference type="GO" id="GO:0140640">
    <property type="term" value="F:catalytic activity, acting on a nucleic acid"/>
    <property type="evidence" value="ECO:0000314"/>
    <property type="project" value="UniProtKB"/>
</dbReference>
<dbReference type="GO" id="GO:0003677">
    <property type="term" value="F:DNA binding"/>
    <property type="evidence" value="ECO:0000303"/>
    <property type="project" value="UniProtKB"/>
</dbReference>
<dbReference type="GO" id="GO:0003678">
    <property type="term" value="F:DNA helicase activity"/>
    <property type="evidence" value="ECO:0000318"/>
    <property type="project" value="GO_Central"/>
</dbReference>
<dbReference type="GO" id="GO:0046872">
    <property type="term" value="F:metal ion binding"/>
    <property type="evidence" value="ECO:0007669"/>
    <property type="project" value="UniProtKB-KW"/>
</dbReference>
<dbReference type="GO" id="GO:0003724">
    <property type="term" value="F:RNA helicase activity"/>
    <property type="evidence" value="ECO:0007669"/>
    <property type="project" value="UniProtKB-EC"/>
</dbReference>
<dbReference type="GO" id="GO:0051026">
    <property type="term" value="P:chiasma assembly"/>
    <property type="evidence" value="ECO:0007669"/>
    <property type="project" value="Ensembl"/>
</dbReference>
<dbReference type="GO" id="GO:0000077">
    <property type="term" value="P:DNA damage checkpoint signaling"/>
    <property type="evidence" value="ECO:0000303"/>
    <property type="project" value="UniProtKB"/>
</dbReference>
<dbReference type="GO" id="GO:0006281">
    <property type="term" value="P:DNA repair"/>
    <property type="evidence" value="ECO:0000303"/>
    <property type="project" value="ComplexPortal"/>
</dbReference>
<dbReference type="GO" id="GO:0006302">
    <property type="term" value="P:double-strand break repair"/>
    <property type="evidence" value="ECO:0000303"/>
    <property type="project" value="UniProtKB"/>
</dbReference>
<dbReference type="GO" id="GO:1990918">
    <property type="term" value="P:double-strand break repair involved in meiotic recombination"/>
    <property type="evidence" value="ECO:0000318"/>
    <property type="project" value="GO_Central"/>
</dbReference>
<dbReference type="GO" id="GO:0035825">
    <property type="term" value="P:homologous recombination"/>
    <property type="evidence" value="ECO:0000303"/>
    <property type="project" value="ComplexPortal"/>
</dbReference>
<dbReference type="GO" id="GO:0010705">
    <property type="term" value="P:meiotic DNA double-strand break processing involved in reciprocal meiotic recombination"/>
    <property type="evidence" value="ECO:0007669"/>
    <property type="project" value="Ensembl"/>
</dbReference>
<dbReference type="GO" id="GO:0006289">
    <property type="term" value="P:nucleotide-excision repair"/>
    <property type="evidence" value="ECO:0000318"/>
    <property type="project" value="GO_Central"/>
</dbReference>
<dbReference type="GO" id="GO:0106300">
    <property type="term" value="P:protein-DNA covalent cross-linking repair"/>
    <property type="evidence" value="ECO:0000314"/>
    <property type="project" value="UniProtKB"/>
</dbReference>
<dbReference type="GO" id="GO:0006357">
    <property type="term" value="P:regulation of transcription by RNA polymerase II"/>
    <property type="evidence" value="ECO:0000314"/>
    <property type="project" value="MGI"/>
</dbReference>
<dbReference type="GO" id="GO:0072520">
    <property type="term" value="P:seminiferous tubule development"/>
    <property type="evidence" value="ECO:0007669"/>
    <property type="project" value="Ensembl"/>
</dbReference>
<dbReference type="GO" id="GO:0007286">
    <property type="term" value="P:spermatid development"/>
    <property type="evidence" value="ECO:0007669"/>
    <property type="project" value="Ensembl"/>
</dbReference>
<dbReference type="GO" id="GO:0007284">
    <property type="term" value="P:spermatogonial cell division"/>
    <property type="evidence" value="ECO:0007669"/>
    <property type="project" value="Ensembl"/>
</dbReference>
<dbReference type="CDD" id="cd17970">
    <property type="entry name" value="DEAHc_FancJ"/>
    <property type="match status" value="1"/>
</dbReference>
<dbReference type="CDD" id="cd18788">
    <property type="entry name" value="SF2_C_XPD"/>
    <property type="match status" value="1"/>
</dbReference>
<dbReference type="FunFam" id="3.40.50.300:FF:000977">
    <property type="entry name" value="BRCA1 interacting protein C-terminal helicase 1"/>
    <property type="match status" value="1"/>
</dbReference>
<dbReference type="FunFam" id="3.40.50.300:FF:001680">
    <property type="entry name" value="BRCA1 interacting protein C-terminal helicase 1"/>
    <property type="match status" value="1"/>
</dbReference>
<dbReference type="FunFam" id="3.40.50.300:FF:000731">
    <property type="entry name" value="Fanconi anemia group J protein homolog"/>
    <property type="match status" value="1"/>
</dbReference>
<dbReference type="Gene3D" id="3.40.50.300">
    <property type="entry name" value="P-loop containing nucleotide triphosphate hydrolases"/>
    <property type="match status" value="3"/>
</dbReference>
<dbReference type="IDEAL" id="IID00181"/>
<dbReference type="InterPro" id="IPR006555">
    <property type="entry name" value="ATP-dep_Helicase_C"/>
</dbReference>
<dbReference type="InterPro" id="IPR045028">
    <property type="entry name" value="DinG/Rad3-like"/>
</dbReference>
<dbReference type="InterPro" id="IPR014013">
    <property type="entry name" value="Helic_SF1/SF2_ATP-bd_DinG/Rad3"/>
</dbReference>
<dbReference type="InterPro" id="IPR006554">
    <property type="entry name" value="Helicase-like_DEXD_c2"/>
</dbReference>
<dbReference type="InterPro" id="IPR014001">
    <property type="entry name" value="Helicase_ATP-bd"/>
</dbReference>
<dbReference type="InterPro" id="IPR027417">
    <property type="entry name" value="P-loop_NTPase"/>
</dbReference>
<dbReference type="InterPro" id="IPR010614">
    <property type="entry name" value="RAD3-like_helicase_DEAD"/>
</dbReference>
<dbReference type="InterPro" id="IPR013020">
    <property type="entry name" value="Rad3/Chl1-like"/>
</dbReference>
<dbReference type="NCBIfam" id="TIGR00604">
    <property type="entry name" value="rad3"/>
    <property type="match status" value="1"/>
</dbReference>
<dbReference type="PANTHER" id="PTHR11472">
    <property type="entry name" value="DNA REPAIR DEAD HELICASE RAD3/XP-D SUBFAMILY MEMBER"/>
    <property type="match status" value="1"/>
</dbReference>
<dbReference type="PANTHER" id="PTHR11472:SF47">
    <property type="entry name" value="FANCONI ANEMIA GROUP J PROTEIN"/>
    <property type="match status" value="1"/>
</dbReference>
<dbReference type="Pfam" id="PF06733">
    <property type="entry name" value="DEAD_2"/>
    <property type="match status" value="1"/>
</dbReference>
<dbReference type="Pfam" id="PF13307">
    <property type="entry name" value="Helicase_C_2"/>
    <property type="match status" value="1"/>
</dbReference>
<dbReference type="SMART" id="SM00487">
    <property type="entry name" value="DEXDc"/>
    <property type="match status" value="1"/>
</dbReference>
<dbReference type="SMART" id="SM00488">
    <property type="entry name" value="DEXDc2"/>
    <property type="match status" value="1"/>
</dbReference>
<dbReference type="SMART" id="SM00491">
    <property type="entry name" value="HELICc2"/>
    <property type="match status" value="1"/>
</dbReference>
<dbReference type="SUPFAM" id="SSF52540">
    <property type="entry name" value="P-loop containing nucleoside triphosphate hydrolases"/>
    <property type="match status" value="2"/>
</dbReference>
<dbReference type="PROSITE" id="PS51193">
    <property type="entry name" value="HELICASE_ATP_BIND_2"/>
    <property type="match status" value="1"/>
</dbReference>
<evidence type="ECO:0000250" key="1">
    <source>
        <dbReference type="UniProtKB" id="Q4JC68"/>
    </source>
</evidence>
<evidence type="ECO:0000255" key="2"/>
<evidence type="ECO:0000255" key="3">
    <source>
        <dbReference type="PROSITE-ProRule" id="PRU00541"/>
    </source>
</evidence>
<evidence type="ECO:0000256" key="4">
    <source>
        <dbReference type="SAM" id="MobiDB-lite"/>
    </source>
</evidence>
<evidence type="ECO:0000269" key="5">
    <source>
    </source>
</evidence>
<evidence type="ECO:0000269" key="6">
    <source>
    </source>
</evidence>
<evidence type="ECO:0000269" key="7">
    <source>
    </source>
</evidence>
<evidence type="ECO:0000269" key="8">
    <source>
    </source>
</evidence>
<evidence type="ECO:0000269" key="9">
    <source>
    </source>
</evidence>
<evidence type="ECO:0000269" key="10">
    <source>
    </source>
</evidence>
<evidence type="ECO:0000269" key="11">
    <source>
    </source>
</evidence>
<evidence type="ECO:0000269" key="12">
    <source>
    </source>
</evidence>
<evidence type="ECO:0000269" key="13">
    <source>
    </source>
</evidence>
<evidence type="ECO:0000269" key="14">
    <source>
    </source>
</evidence>
<evidence type="ECO:0000269" key="15">
    <source>
    </source>
</evidence>
<evidence type="ECO:0000269" key="16">
    <source>
    </source>
</evidence>
<evidence type="ECO:0000269" key="17">
    <source>
    </source>
</evidence>
<evidence type="ECO:0000269" key="18">
    <source>
    </source>
</evidence>
<evidence type="ECO:0000269" key="19">
    <source>
    </source>
</evidence>
<evidence type="ECO:0000269" key="20">
    <source>
    </source>
</evidence>
<evidence type="ECO:0000269" key="21">
    <source>
    </source>
</evidence>
<evidence type="ECO:0000269" key="22">
    <source>
    </source>
</evidence>
<evidence type="ECO:0000269" key="23">
    <source>
    </source>
</evidence>
<evidence type="ECO:0000269" key="24">
    <source>
    </source>
</evidence>
<evidence type="ECO:0000303" key="25">
    <source>
    </source>
</evidence>
<evidence type="ECO:0000303" key="26">
    <source>
    </source>
</evidence>
<evidence type="ECO:0000305" key="27"/>
<evidence type="ECO:0000312" key="28">
    <source>
        <dbReference type="HGNC" id="HGNC:20473"/>
    </source>
</evidence>
<evidence type="ECO:0007744" key="29">
    <source>
    </source>
</evidence>
<evidence type="ECO:0007744" key="30">
    <source>
    </source>
</evidence>
<evidence type="ECO:0007744" key="31">
    <source>
    </source>
</evidence>
<evidence type="ECO:0007744" key="32">
    <source>
    </source>
</evidence>
<sequence length="1249" mass="140867">MSSMWSEYTIGGVKIYFPYKAYPSQLAMMNSILRGLNSKQHCLLESPTGSGKSLALLCSALAWQQSLSGKPADEGVSEKAEVQLSCCCACHSKDFTNNDMNQGTSRHFNYPSTPPSERNGTSSTCQDSPEKTTLAAKLSAKKQASIYRDENDDFQVEKKRIRPLETTQQIRKRHCFGTEVHNLDAKVDSGKTVKLNSPLEKINSFSPQKPPGHCSRCCCSTKQGNSQESSNTIKKDHTGKSKIPKIYFGTRTHKQIAQITRELRRTAYSGVPMTILSSRDHTCVHPEVVGNFNRNEKCMELLDGKNGKSCYFYHGVHKISDQHTLQTFQGMCKAWDIEELVSLGKKLKACPYYTARELIQDADIIFCPYNYLLDAQIRESMDLNLKEQVVILDEAHNIEDCARESASYSVTEVQLRFARDELDSMVNNNIRKKDHEPLRAVCCSLINWLEANAEYLVERDYESACKIWSGNEMLLTLHKMGITTATFPILQGHFSAVLQKEEKISPIYGKEEAREVPVISASTQIMLKGLFMVLDYLFRQNSRFADDYKIAIQQTYSWTNQIDISDKNGLLVLPKNKKRSRQKTAVHVLNFWCLNPAVAFSDINGKVQTIVLTSGTLSPMKSFSSELGVTFTIQLEANHIIKNSQVWVGTIGSGPKGRNLCATFQNTETFEFQDEVGALLLSVCQTVSQGILCFLPSYKLLEKLKERWLSTGLWHNLELVKTVIVEPQGGEKTNFDELLQVYYDAIKYKGEKDGALLVAVCRGKVSEGLDFSDDNARAVITIGIPFPNVKDLQVELKRQYNDHHSKLRGLLPGRQWYEIQAYRALNQALGRCIRHRNDWGALILVDDRFRNNPSRYISGLSKWVRQQIQHHSTFESALESLAEFSKKHQKVLNVSIKDRTNIQDNESTLEVTSLKYSTSPYLLEAASHLSPENFVEDEAKICVQELQCPKIITKNSPLPSSIISRKEKNDPVFLEEAGKAEKIVISRSTSPTFNKQTKRVSWSSFNSLGQYFTGKIPKATPELGSSENSASSPPRFKTEKMESKTVLPFTDKCESSNLTVNTSFGSCPQSETIISSLKIDATLTRKNHSEHPLCSEEALDPDIELSLVSEEDKQSTSNRDFETEAEDESIYFTPELYDPEDTDEEKNDLAETDRGNRLANNSDCILAKDLFEIRTIKEVDSAREVKAEDCIDTKLNGILHIEESKIDDIDGNVKTTWINELELGKTHEIEIKNFKPSPSKNKGMFPGFK</sequence>
<reference key="1">
    <citation type="journal article" date="2001" name="Cell">
        <title>BACH1, a novel helicase-like protein, interacts directly with BRCA1 and contributes to its DNA repair function.</title>
        <authorList>
            <person name="Cantor S.B."/>
            <person name="Bell D.W."/>
            <person name="Ganesan S."/>
            <person name="Kass E.M."/>
            <person name="Drapkin R."/>
            <person name="Grossman S."/>
            <person name="Wahrer D.C.R."/>
            <person name="Sgroi D.C."/>
            <person name="Lane W.S."/>
            <person name="Haber D.A."/>
            <person name="Livingston D.M."/>
        </authorList>
    </citation>
    <scope>NUCLEOTIDE SEQUENCE [MRNA] (ISOFORM 1)</scope>
    <scope>PROTEIN SEQUENCE OF 708-747; 765-790; 815-831; 1079-1085; 1169-1174 AND 1215-1225</scope>
    <scope>FUNCTION</scope>
    <scope>TISSUE SPECIFICITY</scope>
    <scope>SUBCELLULAR LOCATION</scope>
    <scope>INTERACTION WITH BRCA1</scope>
    <scope>MUTAGENESIS OF LYS-52</scope>
    <scope>VARIANTS BC ALA-47 AND ILE-299</scope>
    <scope>VARIANTS ILE-193 AND PRO-919</scope>
    <scope>IDENTIFICATION BY MASS SPECTROMETRY</scope>
</reference>
<reference key="2">
    <citation type="journal article" date="2006" name="Nature">
        <title>DNA sequence of human chromosome 17 and analysis of rearrangement in the human lineage.</title>
        <authorList>
            <person name="Zody M.C."/>
            <person name="Garber M."/>
            <person name="Adams D.J."/>
            <person name="Sharpe T."/>
            <person name="Harrow J."/>
            <person name="Lupski J.R."/>
            <person name="Nicholson C."/>
            <person name="Searle S.M."/>
            <person name="Wilming L."/>
            <person name="Young S.K."/>
            <person name="Abouelleil A."/>
            <person name="Allen N.R."/>
            <person name="Bi W."/>
            <person name="Bloom T."/>
            <person name="Borowsky M.L."/>
            <person name="Bugalter B.E."/>
            <person name="Butler J."/>
            <person name="Chang J.L."/>
            <person name="Chen C.-K."/>
            <person name="Cook A."/>
            <person name="Corum B."/>
            <person name="Cuomo C.A."/>
            <person name="de Jong P.J."/>
            <person name="DeCaprio D."/>
            <person name="Dewar K."/>
            <person name="FitzGerald M."/>
            <person name="Gilbert J."/>
            <person name="Gibson R."/>
            <person name="Gnerre S."/>
            <person name="Goldstein S."/>
            <person name="Grafham D.V."/>
            <person name="Grocock R."/>
            <person name="Hafez N."/>
            <person name="Hagopian D.S."/>
            <person name="Hart E."/>
            <person name="Norman C.H."/>
            <person name="Humphray S."/>
            <person name="Jaffe D.B."/>
            <person name="Jones M."/>
            <person name="Kamal M."/>
            <person name="Khodiyar V.K."/>
            <person name="LaButti K."/>
            <person name="Laird G."/>
            <person name="Lehoczky J."/>
            <person name="Liu X."/>
            <person name="Lokyitsang T."/>
            <person name="Loveland J."/>
            <person name="Lui A."/>
            <person name="Macdonald P."/>
            <person name="Major J.E."/>
            <person name="Matthews L."/>
            <person name="Mauceli E."/>
            <person name="McCarroll S.A."/>
            <person name="Mihalev A.H."/>
            <person name="Mudge J."/>
            <person name="Nguyen C."/>
            <person name="Nicol R."/>
            <person name="O'Leary S.B."/>
            <person name="Osoegawa K."/>
            <person name="Schwartz D.C."/>
            <person name="Shaw-Smith C."/>
            <person name="Stankiewicz P."/>
            <person name="Steward C."/>
            <person name="Swarbreck D."/>
            <person name="Venkataraman V."/>
            <person name="Whittaker C.A."/>
            <person name="Yang X."/>
            <person name="Zimmer A.R."/>
            <person name="Bradley A."/>
            <person name="Hubbard T."/>
            <person name="Birren B.W."/>
            <person name="Rogers J."/>
            <person name="Lander E.S."/>
            <person name="Nusbaum C."/>
        </authorList>
    </citation>
    <scope>NUCLEOTIDE SEQUENCE [LARGE SCALE GENOMIC DNA]</scope>
</reference>
<reference key="3">
    <citation type="submission" date="2005-07" db="EMBL/GenBank/DDBJ databases">
        <authorList>
            <person name="Mural R.J."/>
            <person name="Istrail S."/>
            <person name="Sutton G.G."/>
            <person name="Florea L."/>
            <person name="Halpern A.L."/>
            <person name="Mobarry C.M."/>
            <person name="Lippert R."/>
            <person name="Walenz B."/>
            <person name="Shatkay H."/>
            <person name="Dew I."/>
            <person name="Miller J.R."/>
            <person name="Flanigan M.J."/>
            <person name="Edwards N.J."/>
            <person name="Bolanos R."/>
            <person name="Fasulo D."/>
            <person name="Halldorsson B.V."/>
            <person name="Hannenhalli S."/>
            <person name="Turner R."/>
            <person name="Yooseph S."/>
            <person name="Lu F."/>
            <person name="Nusskern D.R."/>
            <person name="Shue B.C."/>
            <person name="Zheng X.H."/>
            <person name="Zhong F."/>
            <person name="Delcher A.L."/>
            <person name="Huson D.H."/>
            <person name="Kravitz S.A."/>
            <person name="Mouchard L."/>
            <person name="Reinert K."/>
            <person name="Remington K.A."/>
            <person name="Clark A.G."/>
            <person name="Waterman M.S."/>
            <person name="Eichler E.E."/>
            <person name="Adams M.D."/>
            <person name="Hunkapiller M.W."/>
            <person name="Myers E.W."/>
            <person name="Venter J.C."/>
        </authorList>
    </citation>
    <scope>NUCLEOTIDE SEQUENCE [LARGE SCALE GENOMIC DNA]</scope>
</reference>
<reference key="4">
    <citation type="journal article" date="2004" name="Genome Res.">
        <title>The status, quality, and expansion of the NIH full-length cDNA project: the Mammalian Gene Collection (MGC).</title>
        <authorList>
            <consortium name="The MGC Project Team"/>
        </authorList>
    </citation>
    <scope>NUCLEOTIDE SEQUENCE [LARGE SCALE MRNA] (ISOFORM 1)</scope>
    <scope>VARIANT PRO-919</scope>
</reference>
<reference key="5">
    <citation type="journal article" date="2004" name="Nat. Genet.">
        <title>Complete sequencing and characterization of 21,243 full-length human cDNAs.</title>
        <authorList>
            <person name="Ota T."/>
            <person name="Suzuki Y."/>
            <person name="Nishikawa T."/>
            <person name="Otsuki T."/>
            <person name="Sugiyama T."/>
            <person name="Irie R."/>
            <person name="Wakamatsu A."/>
            <person name="Hayashi K."/>
            <person name="Sato H."/>
            <person name="Nagai K."/>
            <person name="Kimura K."/>
            <person name="Makita H."/>
            <person name="Sekine M."/>
            <person name="Obayashi M."/>
            <person name="Nishi T."/>
            <person name="Shibahara T."/>
            <person name="Tanaka T."/>
            <person name="Ishii S."/>
            <person name="Yamamoto J."/>
            <person name="Saito K."/>
            <person name="Kawai Y."/>
            <person name="Isono Y."/>
            <person name="Nakamura Y."/>
            <person name="Nagahari K."/>
            <person name="Murakami K."/>
            <person name="Yasuda T."/>
            <person name="Iwayanagi T."/>
            <person name="Wagatsuma M."/>
            <person name="Shiratori A."/>
            <person name="Sudo H."/>
            <person name="Hosoiri T."/>
            <person name="Kaku Y."/>
            <person name="Kodaira H."/>
            <person name="Kondo H."/>
            <person name="Sugawara M."/>
            <person name="Takahashi M."/>
            <person name="Kanda K."/>
            <person name="Yokoi T."/>
            <person name="Furuya T."/>
            <person name="Kikkawa E."/>
            <person name="Omura Y."/>
            <person name="Abe K."/>
            <person name="Kamihara K."/>
            <person name="Katsuta N."/>
            <person name="Sato K."/>
            <person name="Tanikawa M."/>
            <person name="Yamazaki M."/>
            <person name="Ninomiya K."/>
            <person name="Ishibashi T."/>
            <person name="Yamashita H."/>
            <person name="Murakawa K."/>
            <person name="Fujimori K."/>
            <person name="Tanai H."/>
            <person name="Kimata M."/>
            <person name="Watanabe M."/>
            <person name="Hiraoka S."/>
            <person name="Chiba Y."/>
            <person name="Ishida S."/>
            <person name="Ono Y."/>
            <person name="Takiguchi S."/>
            <person name="Watanabe S."/>
            <person name="Yosida M."/>
            <person name="Hotuta T."/>
            <person name="Kusano J."/>
            <person name="Kanehori K."/>
            <person name="Takahashi-Fujii A."/>
            <person name="Hara H."/>
            <person name="Tanase T.-O."/>
            <person name="Nomura Y."/>
            <person name="Togiya S."/>
            <person name="Komai F."/>
            <person name="Hara R."/>
            <person name="Takeuchi K."/>
            <person name="Arita M."/>
            <person name="Imose N."/>
            <person name="Musashino K."/>
            <person name="Yuuki H."/>
            <person name="Oshima A."/>
            <person name="Sasaki N."/>
            <person name="Aotsuka S."/>
            <person name="Yoshikawa Y."/>
            <person name="Matsunawa H."/>
            <person name="Ichihara T."/>
            <person name="Shiohata N."/>
            <person name="Sano S."/>
            <person name="Moriya S."/>
            <person name="Momiyama H."/>
            <person name="Satoh N."/>
            <person name="Takami S."/>
            <person name="Terashima Y."/>
            <person name="Suzuki O."/>
            <person name="Nakagawa S."/>
            <person name="Senoh A."/>
            <person name="Mizoguchi H."/>
            <person name="Goto Y."/>
            <person name="Shimizu F."/>
            <person name="Wakebe H."/>
            <person name="Hishigaki H."/>
            <person name="Watanabe T."/>
            <person name="Sugiyama A."/>
            <person name="Takemoto M."/>
            <person name="Kawakami B."/>
            <person name="Yamazaki M."/>
            <person name="Watanabe K."/>
            <person name="Kumagai A."/>
            <person name="Itakura S."/>
            <person name="Fukuzumi Y."/>
            <person name="Fujimori Y."/>
            <person name="Komiyama M."/>
            <person name="Tashiro H."/>
            <person name="Tanigami A."/>
            <person name="Fujiwara T."/>
            <person name="Ono T."/>
            <person name="Yamada K."/>
            <person name="Fujii Y."/>
            <person name="Ozaki K."/>
            <person name="Hirao M."/>
            <person name="Ohmori Y."/>
            <person name="Kawabata A."/>
            <person name="Hikiji T."/>
            <person name="Kobatake N."/>
            <person name="Inagaki H."/>
            <person name="Ikema Y."/>
            <person name="Okamoto S."/>
            <person name="Okitani R."/>
            <person name="Kawakami T."/>
            <person name="Noguchi S."/>
            <person name="Itoh T."/>
            <person name="Shigeta K."/>
            <person name="Senba T."/>
            <person name="Matsumura K."/>
            <person name="Nakajima Y."/>
            <person name="Mizuno T."/>
            <person name="Morinaga M."/>
            <person name="Sasaki M."/>
            <person name="Togashi T."/>
            <person name="Oyama M."/>
            <person name="Hata H."/>
            <person name="Watanabe M."/>
            <person name="Komatsu T."/>
            <person name="Mizushima-Sugano J."/>
            <person name="Satoh T."/>
            <person name="Shirai Y."/>
            <person name="Takahashi Y."/>
            <person name="Nakagawa K."/>
            <person name="Okumura K."/>
            <person name="Nagase T."/>
            <person name="Nomura N."/>
            <person name="Kikuchi H."/>
            <person name="Masuho Y."/>
            <person name="Yamashita R."/>
            <person name="Nakai K."/>
            <person name="Yada T."/>
            <person name="Nakamura Y."/>
            <person name="Ohara O."/>
            <person name="Isogai T."/>
            <person name="Sugano S."/>
        </authorList>
    </citation>
    <scope>NUCLEOTIDE SEQUENCE [LARGE SCALE MRNA] OF 558-1249 (ISOFORM 2)</scope>
</reference>
<reference key="6">
    <citation type="journal article" date="2003" name="Science">
        <title>The BRCT domain is a phospho-protein binding domain.</title>
        <authorList>
            <person name="Yu X."/>
            <person name="Chini C.C.S."/>
            <person name="He M."/>
            <person name="Mer G."/>
            <person name="Chen J."/>
        </authorList>
    </citation>
    <scope>PHOSPHORYLATION AT SER-990</scope>
    <scope>MUTAGENESIS OF SER-986; SER-988; THR-989; SER-990; PRO-991; THR-992; PHE-993; THR-997; SER-1001; SER-1003; SER-1004; SER-1007; TYR-1011 AND THR-1013</scope>
</reference>
<reference key="7">
    <citation type="journal article" date="2004" name="Proc. Natl. Acad. Sci. U.S.A.">
        <title>The BRCA1-associated protein BACH1 is a DNA helicase targeted by clinically relevant inactivating mutations.</title>
        <authorList>
            <person name="Cantor S.B."/>
            <person name="Drapkin R."/>
            <person name="Zhang F."/>
            <person name="Lin Y."/>
            <person name="Han J."/>
            <person name="Pamidi S."/>
            <person name="Livingston D.M."/>
        </authorList>
    </citation>
    <scope>FUNCTION AS A 5'-3' HELICASE</scope>
    <scope>CATALYTIC ACTIVITY</scope>
    <scope>MUTAGENESIS OF LYS-52</scope>
    <scope>CHARACTERIZATION OF VARIANTS BC ALA-47 AND ILE-299</scope>
</reference>
<reference key="8">
    <citation type="journal article" date="2005" name="Cancer Cell">
        <title>BACH1 is critical for homologous recombination and appears to be the Fanconi anemia gene product FANCJ.</title>
        <authorList>
            <person name="Litman R."/>
            <person name="Peng M."/>
            <person name="Jin Z."/>
            <person name="Zhang F."/>
            <person name="Zhang J."/>
            <person name="Powell S."/>
            <person name="Andreassen P.R."/>
            <person name="Cantor S.B."/>
        </authorList>
    </citation>
    <scope>FUNCTION</scope>
    <scope>VARIANT PRO-919</scope>
    <scope>DISEASE</scope>
</reference>
<reference key="9">
    <citation type="journal article" date="2005" name="Nat. Genet.">
        <title>The BRIP1 helicase functions independently of BRCA1 in the Fanconi anemia pathway for DNA crosslink repair.</title>
        <authorList>
            <person name="Bridge W.L."/>
            <person name="Vandenberg C.J."/>
            <person name="Franklin R.J."/>
            <person name="Hiom K."/>
        </authorList>
    </citation>
    <scope>FUNCTION</scope>
    <scope>MUTAGENESIS OF LYS-52</scope>
    <scope>DISEASE</scope>
</reference>
<reference key="10">
    <citation type="journal article" date="2006" name="Mol. Cell">
        <title>The DNA repair helicases XPD and FancJ have essential iron-sulfur domains.</title>
        <authorList>
            <person name="Rudolf J."/>
            <person name="Makrantoni V."/>
            <person name="Ingledew W.J."/>
            <person name="Stark M.J."/>
            <person name="White M.F."/>
        </authorList>
    </citation>
    <scope>COFACTOR</scope>
</reference>
<reference key="11">
    <citation type="journal article" date="2007" name="Blood">
        <title>FANCJ (BACH1) helicase forms DNA damage inducible foci with replication protein A and interacts physically and functionally with the single-stranded DNA-binding protein.</title>
        <authorList>
            <person name="Gupta R."/>
            <person name="Sharma S."/>
            <person name="Sommers J.A."/>
            <person name="Kenny M.K."/>
            <person name="Cantor S.B."/>
            <person name="Brosh R.M. Jr."/>
        </authorList>
    </citation>
    <scope>FUNCTION AS A HELICASE</scope>
    <scope>ACTIVITY REGULATION</scope>
    <scope>INTERACTION WITH REPLICATION PROTEIN A (RPA1)</scope>
    <scope>SUBCELLULAR LOCATION</scope>
</reference>
<reference key="12">
    <citation type="journal article" date="2008" name="Mol. Cell. Biol.">
        <title>FANCJ helicase defective in Fanconia anemia and breast cancer unwinds G-quadruplex DNA to defend genomic stability.</title>
        <authorList>
            <person name="Wu Y."/>
            <person name="Shin-ya K."/>
            <person name="Brosh R.M. Jr."/>
        </authorList>
    </citation>
    <scope>FUNCTION</scope>
    <scope>ACTIVITY REGULATION</scope>
    <scope>MUTAGENESIS OF LYS-52</scope>
</reference>
<reference key="13">
    <citation type="journal article" date="2008" name="Proc. Natl. Acad. Sci. U.S.A.">
        <title>A quantitative atlas of mitotic phosphorylation.</title>
        <authorList>
            <person name="Dephoure N."/>
            <person name="Zhou C."/>
            <person name="Villen J."/>
            <person name="Beausoleil S.A."/>
            <person name="Bakalarski C.E."/>
            <person name="Elledge S.J."/>
            <person name="Gygi S.P."/>
        </authorList>
    </citation>
    <scope>PHOSPHORYLATION [LARGE SCALE ANALYSIS] AT SER-927; SER-930 AND SER-990</scope>
    <scope>IDENTIFICATION BY MASS SPECTROMETRY [LARGE SCALE ANALYSIS]</scope>
    <source>
        <tissue>Cervix carcinoma</tissue>
    </source>
</reference>
<reference key="14">
    <citation type="journal article" date="2009" name="Sci. Signal.">
        <title>Quantitative phosphoproteomic analysis of T cell receptor signaling reveals system-wide modulation of protein-protein interactions.</title>
        <authorList>
            <person name="Mayya V."/>
            <person name="Lundgren D.H."/>
            <person name="Hwang S.-I."/>
            <person name="Rezaul K."/>
            <person name="Wu L."/>
            <person name="Eng J.K."/>
            <person name="Rodionov V."/>
            <person name="Han D.K."/>
        </authorList>
    </citation>
    <scope>PHOSPHORYLATION [LARGE SCALE ANALYSIS] AT SER-930 AND SER-1032</scope>
    <scope>IDENTIFICATION BY MASS SPECTROMETRY [LARGE SCALE ANALYSIS]</scope>
    <source>
        <tissue>Leukemic T-cell</tissue>
    </source>
</reference>
<reference key="15">
    <citation type="journal article" date="2010" name="Sci. Signal.">
        <title>Quantitative phosphoproteomics reveals widespread full phosphorylation site occupancy during mitosis.</title>
        <authorList>
            <person name="Olsen J.V."/>
            <person name="Vermeulen M."/>
            <person name="Santamaria A."/>
            <person name="Kumar C."/>
            <person name="Miller M.L."/>
            <person name="Jensen L.J."/>
            <person name="Gnad F."/>
            <person name="Cox J."/>
            <person name="Jensen T.S."/>
            <person name="Nigg E.A."/>
            <person name="Brunak S."/>
            <person name="Mann M."/>
        </authorList>
    </citation>
    <scope>PHOSPHORYLATION [LARGE SCALE ANALYSIS] AT SER-1237</scope>
    <scope>IDENTIFICATION BY MASS SPECTROMETRY [LARGE SCALE ANALYSIS]</scope>
    <source>
        <tissue>Cervix carcinoma</tissue>
    </source>
</reference>
<reference key="16">
    <citation type="journal article" date="2012" name="PLoS Genet.">
        <title>FANCJ/BACH1 acetylation at lysine 1249 regulates the DNA damage response.</title>
        <authorList>
            <person name="Xie J."/>
            <person name="Peng M."/>
            <person name="Guillemette S."/>
            <person name="Quan S."/>
            <person name="Maniatis S."/>
            <person name="Wu Y."/>
            <person name="Venkatesh A."/>
            <person name="Shaffer S.A."/>
            <person name="Brosh R.M. Jr."/>
            <person name="Cantor S.B."/>
        </authorList>
    </citation>
    <scope>ACETYLATION AT LYS-1249</scope>
</reference>
<reference key="17">
    <citation type="journal article" date="2013" name="J. Biol. Chem.">
        <title>IOP1 protein is an external component of the human cytosolic iron-sulfur cluster assembly (CIA) machinery and functions in the MMS19 protein-dependent CIA pathway.</title>
        <authorList>
            <person name="Seki M."/>
            <person name="Takeda Y."/>
            <person name="Iwai K."/>
            <person name="Tanaka K."/>
        </authorList>
    </citation>
    <scope>SUBCELLULAR LOCATION</scope>
    <scope>INTERACTION WITH CIAO1; CIAO2B AND MMS19</scope>
</reference>
<reference key="18">
    <citation type="journal article" date="2013" name="J. Proteome Res.">
        <title>Toward a comprehensive characterization of a human cancer cell phosphoproteome.</title>
        <authorList>
            <person name="Zhou H."/>
            <person name="Di Palma S."/>
            <person name="Preisinger C."/>
            <person name="Peng M."/>
            <person name="Polat A.N."/>
            <person name="Heck A.J."/>
            <person name="Mohammed S."/>
        </authorList>
    </citation>
    <scope>PHOSPHORYLATION [LARGE SCALE ANALYSIS] AT SER-505; SER-956; SER-1004 AND SER-1032</scope>
    <scope>IDENTIFICATION BY MASS SPECTROMETRY [LARGE SCALE ANALYSIS]</scope>
    <source>
        <tissue>Cervix carcinoma</tissue>
        <tissue>Erythroleukemia</tissue>
    </source>
</reference>
<reference key="19">
    <citation type="journal article" date="2023" name="Mol. Cell">
        <title>The FANCJ helicase unfolds DNA-protein crosslinks to promote their repair.</title>
        <authorList>
            <person name="Yaneva D."/>
            <person name="Sparks J.L."/>
            <person name="Donsbach M."/>
            <person name="Zhao S."/>
            <person name="Weickert P."/>
            <person name="Bezalel-Buch R."/>
            <person name="Stingele J."/>
            <person name="Walter J.C."/>
        </authorList>
    </citation>
    <scope>FUNCTION</scope>
    <scope>CATALYTIC ACTIVITY</scope>
    <scope>MUTAGENESIS OF LYS-52</scope>
</reference>
<reference key="20">
    <citation type="journal article" date="2004" name="Mol. Cell">
        <title>Structure of the BRCT repeats of BRCA1 bound to a BACH1 phosphopeptide: implications for signaling.</title>
        <authorList>
            <person name="Shiozaki E.N."/>
            <person name="Gu L."/>
            <person name="Yan N."/>
            <person name="Shi Y."/>
        </authorList>
    </citation>
    <scope>X-RAY CRYSTALLOGRAPHY (2.3 ANGSTROMS) OF 985-998 IN COMPLEX WITH BRCA1</scope>
    <scope>SUBUNIT</scope>
</reference>
<reference key="21">
    <citation type="journal article" date="2002" name="Int. J. Cancer">
        <title>No mutations in the BACH1 gene in BRCA1 and BRCA2 negative breast-cancer families linked to 17q22.</title>
        <authorList>
            <person name="Luo L."/>
            <person name="Lei H."/>
            <person name="Du Q."/>
            <person name="von Wachenfeldt A."/>
            <person name="Kockum I."/>
            <person name="Luthman H."/>
            <person name="Vorechovsky I."/>
            <person name="Lindblom A."/>
        </authorList>
    </citation>
    <scope>VARIANTS CYS-173 AND PRO-919</scope>
</reference>
<reference key="22">
    <citation type="journal article" date="2003" name="Eur. J. Cancer">
        <title>No evidence of involvement of germline BACH1 mutations in Finnish breast and ovarian cancer families.</title>
        <authorList>
            <person name="Karppinen S.-M."/>
            <person name="Vuosku J."/>
            <person name="Heikkinen K."/>
            <person name="Allinen M."/>
            <person name="Winqvist R."/>
        </authorList>
    </citation>
    <scope>VARIANTS PRO-919 AND LEU-1034</scope>
</reference>
<reference key="23">
    <citation type="journal article" date="2003" name="Hum. Mutat.">
        <title>Mutational analysis of the BRCA1-interacting genes ZNF350/ZBRK1 and BRIP1/BACH1 among BRCA1 and BRCA2-negative probands from breast-ovarian cancer families and among early-onset breast cancer cases and reference individuals.</title>
        <authorList>
            <person name="Rutter J.L."/>
            <person name="Smith A.M."/>
            <person name="Davila M.R."/>
            <person name="Sigurdson A.J."/>
            <person name="Giusti R.M."/>
            <person name="Pineda M.A."/>
            <person name="Doody M.M."/>
            <person name="Tucker M.A."/>
            <person name="Greene M.H."/>
            <person name="Zhang J."/>
            <person name="Struewing J.P."/>
        </authorList>
    </citation>
    <scope>VARIANTS CYS-173; ILE-193; PRO-195; TRP-419; VAL-531; LEU-540; TYR-832; PRO-919 AND GLY-935</scope>
</reference>
<reference key="24">
    <citation type="journal article" date="2005" name="Nat. Genet.">
        <title>The BRCA1-interacting helicase BRIP1 is deficient in Fanconi anemia.</title>
        <authorList>
            <person name="Levran O."/>
            <person name="Attwooll C."/>
            <person name="Henry R.T."/>
            <person name="Milton K.L."/>
            <person name="Neveling K."/>
            <person name="Rio P."/>
            <person name="Batish S.D."/>
            <person name="Kalb R."/>
            <person name="Velleuer E."/>
            <person name="Barral S."/>
            <person name="Ott J."/>
            <person name="Petrini J."/>
            <person name="Schindler D."/>
            <person name="Hanenberg H."/>
            <person name="Auerbach A.D."/>
        </authorList>
    </citation>
    <scope>VARIANT FANCJ PRO-349</scope>
</reference>
<reference key="25">
    <citation type="journal article" date="2005" name="Nat. Genet.">
        <title>The DNA helicase BRIP1 is defective in Fanconi anemia complementation group J.</title>
        <authorList>
            <person name="Levitus M."/>
            <person name="Waisfisz Q."/>
            <person name="Godthelp B.C."/>
            <person name="Vries Y."/>
            <person name="Hussain S."/>
            <person name="Wiegant W.W."/>
            <person name="Elghalbzouri-Maghrani E."/>
            <person name="Steltenpool J."/>
            <person name="Rooimans M.A."/>
            <person name="Pals G."/>
            <person name="Arwert F."/>
            <person name="Mathew C.G."/>
            <person name="Zdzienicka M.Z."/>
            <person name="Hiom K."/>
            <person name="De Winter J.P."/>
            <person name="Joenje H."/>
        </authorList>
    </citation>
    <scope>VARIANTS FANCJ HIS-255; CYS-647 AND CYS-707</scope>
    <scope>VARIANT TRP-264</scope>
</reference>
<reference key="26">
    <citation type="journal article" date="2008" name="Nature">
        <title>DNA sequencing of a cytogenetically normal acute myeloid leukaemia genome.</title>
        <authorList>
            <person name="Ley T.J."/>
            <person name="Mardis E.R."/>
            <person name="Ding L."/>
            <person name="Fulton B."/>
            <person name="McLellan M.D."/>
            <person name="Chen K."/>
            <person name="Dooling D."/>
            <person name="Dunford-Shore B.H."/>
            <person name="McGrath S."/>
            <person name="Hickenbotham M."/>
            <person name="Cook L."/>
            <person name="Abbott R."/>
            <person name="Larson D.E."/>
            <person name="Koboldt D.C."/>
            <person name="Pohl C."/>
            <person name="Smith S."/>
            <person name="Hawkins A."/>
            <person name="Abbott S."/>
            <person name="Locke D."/>
            <person name="Hillier L.W."/>
            <person name="Miner T."/>
            <person name="Fulton L."/>
            <person name="Magrini V."/>
            <person name="Wylie T."/>
            <person name="Glasscock J."/>
            <person name="Conyers J."/>
            <person name="Sander N."/>
            <person name="Shi X."/>
            <person name="Osborne J.R."/>
            <person name="Minx P."/>
            <person name="Gordon D."/>
            <person name="Chinwalla A."/>
            <person name="Zhao Y."/>
            <person name="Ries R.E."/>
            <person name="Payton J.E."/>
            <person name="Westervelt P."/>
            <person name="Tomasson M.H."/>
            <person name="Watson M."/>
            <person name="Baty J."/>
            <person name="Ivanovich J."/>
            <person name="Heath S."/>
            <person name="Shannon W.D."/>
            <person name="Nagarajan R."/>
            <person name="Walter M.J."/>
            <person name="Link D.C."/>
            <person name="Graubert T.A."/>
            <person name="DiPersio J.F."/>
            <person name="Wilson R.K."/>
        </authorList>
    </citation>
    <scope>VARIANT [LARGE SCALE ANALYSIS] PRO-919</scope>
</reference>
<reference key="27">
    <citation type="journal article" date="2010" name="Blood">
        <title>Fanconi anemia group J mutation abolishes its DNA repair function by uncoupling DNA translocation from helicase activity or disruption of protein-DNA complexes.</title>
        <authorList>
            <person name="Wu Y."/>
            <person name="Sommers J.A."/>
            <person name="Suhasini A.N."/>
            <person name="Leonard T."/>
            <person name="Deakyne J.S."/>
            <person name="Mazin A.V."/>
            <person name="Shin-Ya K."/>
            <person name="Kitao H."/>
            <person name="Brosh R.M. Jr."/>
        </authorList>
    </citation>
    <scope>VARIANT FANCJ PRO-349</scope>
    <scope>COFACTOR</scope>
    <scope>CHARACTERIZATION OF VARIANT FANCJ PRO-349</scope>
    <scope>FUNCTION</scope>
    <scope>CATALYTIC ACTIVITY</scope>
</reference>
<proteinExistence type="evidence at protein level"/>
<comment type="function">
    <text evidence="5 11 13 16 18 19 21 24">DNA-dependent ATPase and 5'-3' DNA helicase required for the maintenance of chromosomal stability (PubMed:11301010, PubMed:14983014, PubMed:16116421, PubMed:16153896, PubMed:17596542, PubMed:36608669). Acts late in the Fanconi anemia pathway, after FANCD2 ubiquitination (PubMed:14983014, PubMed:16153896). Involved in the repair of DNA double-strand breaks by homologous recombination in a manner that depends on its association with BRCA1 (PubMed:14983014, PubMed:16153896). Involved in the repair of abasic sites at replication forks by promoting the degradation of DNA-protein cross-links: acts by catalyzing unfolding of HMCES DNA-protein cross-link via its helicase activity, exposing the underlying DNA and enabling cleavage of the DNA-protein adduct by the SPRTN metalloprotease (PubMed:16116421, PubMed:36608669). Can unwind RNA:DNA substrates (PubMed:14983014). Unwinds G-quadruplex DNA; unwinding requires a 5'-single stranded tail (PubMed:18426915, PubMed:20639400).</text>
</comment>
<comment type="catalytic activity">
    <reaction evidence="11 21 24">
        <text>Couples ATP hydrolysis with the unwinding of duplex DNA at the replication fork by translocating in the 5'-3' direction. This creates two antiparallel DNA single strands (ssDNA). The leading ssDNA polymer is the template for DNA polymerase III holoenzyme which synthesizes a continuous strand.</text>
        <dbReference type="EC" id="5.6.2.3"/>
    </reaction>
</comment>
<comment type="catalytic activity">
    <reaction evidence="11 21 24">
        <text>ATP + H2O = ADP + phosphate + H(+)</text>
        <dbReference type="Rhea" id="RHEA:13065"/>
        <dbReference type="ChEBI" id="CHEBI:15377"/>
        <dbReference type="ChEBI" id="CHEBI:15378"/>
        <dbReference type="ChEBI" id="CHEBI:30616"/>
        <dbReference type="ChEBI" id="CHEBI:43474"/>
        <dbReference type="ChEBI" id="CHEBI:456216"/>
        <dbReference type="EC" id="5.6.2.3"/>
    </reaction>
</comment>
<comment type="cofactor">
    <cofactor evidence="17 21">
        <name>[4Fe-4S] cluster</name>
        <dbReference type="ChEBI" id="CHEBI:49883"/>
    </cofactor>
    <text evidence="21">Binds 1 [4Fe-4S] cluster.</text>
</comment>
<comment type="activity regulation">
    <text evidence="18 19">Helicase activity on forked substrates is stimulated by replication protein A complex heterotrimer (RPA1, RPA2, RPA3) (PubMed:17596542). Helicase activity on G-quadruplex DNA is stimulated 3-fold by RPA, and inhibited by MSH2/MSH6 (PubMed:18426915). Unwinding of G-quadruplex DNA is inhibited by ATP-gamma-S and telomestatin (TMS); TMA does not inhibit unwinding of forked-duplex DNA (PubMed:18426915). Helicase activity on dsDNA and G-quadruplex DNA is inhibited by porphyrin derivatives meso-tetra (N-methyl-4-pyridyl) porphine tetra tosylate (T4) and N-methyl mesoporphyrin IX (NMM) (PubMed:18426915).</text>
</comment>
<comment type="subunit">
    <text evidence="12 18 23">Interacts with the replication protein A complex (RPA) via the RPA1 subunit; following DNA damage they colocalize in foci in the nucleus (PubMed:17596542). Binds directly to the BRCT domains of BRCA1 (PubMed:15125843). Interacts with the CIA complex components CIAO1, CIAO2B and MMS19 (PubMed:23585563).</text>
</comment>
<comment type="interaction">
    <interactant intactId="EBI-3509650">
        <id>Q9BX63</id>
    </interactant>
    <interactant intactId="EBI-621372">
        <id>P54132</id>
        <label>BLM</label>
    </interactant>
    <organismsDiffer>false</organismsDiffer>
    <experiments>16</experiments>
</comment>
<comment type="interaction">
    <interactant intactId="EBI-3509650">
        <id>Q9BX63</id>
    </interactant>
    <interactant intactId="EBI-349905">
        <id>P38398</id>
        <label>BRCA1</label>
    </interactant>
    <organismsDiffer>false</organismsDiffer>
    <experiments>29</experiments>
</comment>
<comment type="interaction">
    <interactant intactId="EBI-3509650">
        <id>Q9BX63</id>
    </interactant>
    <interactant intactId="EBI-742664">
        <id>Q9BPX1</id>
        <label>HSD17B14</label>
    </interactant>
    <organismsDiffer>false</organismsDiffer>
    <experiments>4</experiments>
</comment>
<comment type="interaction">
    <interactant intactId="EBI-3509650">
        <id>Q9BX63</id>
    </interactant>
    <interactant intactId="EBI-744248">
        <id>P40692</id>
        <label>MLH1</label>
    </interactant>
    <organismsDiffer>false</organismsDiffer>
    <experiments>20</experiments>
</comment>
<comment type="interaction">
    <interactant intactId="EBI-3509650">
        <id>Q9BX63</id>
    </interactant>
    <interactant intactId="EBI-1044169">
        <id>Q96T76</id>
        <label>MMS19</label>
    </interactant>
    <organismsDiffer>false</organismsDiffer>
    <experiments>4</experiments>
</comment>
<comment type="subcellular location">
    <subcellularLocation>
        <location evidence="5 18 23">Nucleus</location>
    </subcellularLocation>
    <subcellularLocation>
        <location evidence="23">Cytoplasm</location>
    </subcellularLocation>
</comment>
<comment type="alternative products">
    <event type="alternative splicing"/>
    <isoform>
        <id>Q9BX63-1</id>
        <name>1</name>
        <sequence type="displayed"/>
    </isoform>
    <isoform>
        <id>Q9BX63-2</id>
        <name>2</name>
        <sequence type="described" ref="VSP_012540 VSP_012541"/>
    </isoform>
</comment>
<comment type="tissue specificity">
    <text evidence="5">Ubiquitously expressed, with highest levels in testis.</text>
</comment>
<comment type="domain">
    <text evidence="21">4Fe-4S iron-sulfur-binding is required for helicase activity.</text>
</comment>
<comment type="PTM">
    <text evidence="9">Phosphorylated. Phosphorylation is necessary for interaction with BRCA1, and is cell-cycle regulated.</text>
</comment>
<comment type="PTM">
    <text evidence="22">Acetylation at Lys-1249 facilitates DNA end processing required for repair and checkpoint signaling.</text>
</comment>
<comment type="disease" evidence="5 11">
    <disease id="DI-02602">
        <name>Breast cancer</name>
        <acronym>BC</acronym>
        <description>A common malignancy originating from breast epithelial tissue. Breast neoplasms can be distinguished by their histologic pattern. Invasive ductal carcinoma is by far the most common type. Breast cancer is etiologically and genetically heterogeneous. Important genetic factors have been indicated by familial occurrence and bilateral involvement. Mutations at more than one locus can be involved in different families or even in the same case.</description>
        <dbReference type="MIM" id="114480"/>
    </disease>
    <text>Disease susceptibility is associated with variants affecting the gene represented in this entry.</text>
</comment>
<comment type="disease" evidence="14 15 21">
    <disease id="DI-01603">
        <name>Fanconi anemia complementation group J</name>
        <acronym>FANCJ</acronym>
        <description>A disorder affecting all bone marrow elements and resulting in anemia, leukopenia and thrombopenia. It is associated with cardiac, renal and limb malformations, dermal pigmentary changes, and a predisposition to the development of malignancies. At the cellular level it is associated with hypersensitivity to DNA-damaging agents, chromosomal instability (increased chromosome breakage) and defective DNA repair.</description>
        <dbReference type="MIM" id="609054"/>
    </disease>
    <text>The disease is caused by variants affecting the gene represented in this entry.</text>
</comment>
<comment type="similarity">
    <text evidence="27">Belongs to the DEAD box helicase family. DEAH subfamily.</text>
</comment>
<comment type="sequence caution" evidence="27">
    <conflict type="erroneous initiation">
        <sequence resource="EMBL-CDS" id="BAC11156"/>
    </conflict>
    <text>Truncated N-terminus.</text>
</comment>
<comment type="online information" name="Fanconi Anemia Mutation Database">
    <link uri="https://www2.rockefeller.edu/fanconi/genes/jumpj"/>
</comment>
<organism>
    <name type="scientific">Homo sapiens</name>
    <name type="common">Human</name>
    <dbReference type="NCBI Taxonomy" id="9606"/>
    <lineage>
        <taxon>Eukaryota</taxon>
        <taxon>Metazoa</taxon>
        <taxon>Chordata</taxon>
        <taxon>Craniata</taxon>
        <taxon>Vertebrata</taxon>
        <taxon>Euteleostomi</taxon>
        <taxon>Mammalia</taxon>
        <taxon>Eutheria</taxon>
        <taxon>Euarchontoglires</taxon>
        <taxon>Primates</taxon>
        <taxon>Haplorrhini</taxon>
        <taxon>Catarrhini</taxon>
        <taxon>Hominidae</taxon>
        <taxon>Homo</taxon>
    </lineage>
</organism>
<protein>
    <recommendedName>
        <fullName evidence="27">Fanconi anemia group J protein</fullName>
        <ecNumber evidence="11 21 24">5.6.2.3</ecNumber>
    </recommendedName>
    <alternativeName>
        <fullName>BRCA1-associated C-terminal helicase 1</fullName>
    </alternativeName>
    <alternativeName>
        <fullName evidence="25">BRCA1-interacting protein C-terminal helicase 1</fullName>
        <shortName evidence="25">BRCA1-interacting protein 1</shortName>
    </alternativeName>
    <alternativeName>
        <fullName evidence="27">DNA 5'-3' helicase FANCJ</fullName>
    </alternativeName>
</protein>
<gene>
    <name evidence="28" type="primary">BRIP1</name>
    <name evidence="25" type="synonym">BACH1</name>
    <name type="synonym">FANCJ</name>
</gene>
<keyword id="KW-0002">3D-structure</keyword>
<keyword id="KW-0004">4Fe-4S</keyword>
<keyword id="KW-0007">Acetylation</keyword>
<keyword id="KW-0025">Alternative splicing</keyword>
<keyword id="KW-0067">ATP-binding</keyword>
<keyword id="KW-0963">Cytoplasm</keyword>
<keyword id="KW-0903">Direct protein sequencing</keyword>
<keyword id="KW-0225">Disease variant</keyword>
<keyword id="KW-0227">DNA damage</keyword>
<keyword id="KW-0234">DNA repair</keyword>
<keyword id="KW-0923">Fanconi anemia</keyword>
<keyword id="KW-0347">Helicase</keyword>
<keyword id="KW-0378">Hydrolase</keyword>
<keyword id="KW-0408">Iron</keyword>
<keyword id="KW-0411">Iron-sulfur</keyword>
<keyword id="KW-0413">Isomerase</keyword>
<keyword id="KW-0479">Metal-binding</keyword>
<keyword id="KW-0547">Nucleotide-binding</keyword>
<keyword id="KW-0539">Nucleus</keyword>
<keyword id="KW-0597">Phosphoprotein</keyword>
<keyword id="KW-1267">Proteomics identification</keyword>
<keyword id="KW-1185">Reference proteome</keyword>